<evidence type="ECO:0000250" key="1">
    <source>
        <dbReference type="UniProtKB" id="P22061"/>
    </source>
</evidence>
<evidence type="ECO:0000250" key="2">
    <source>
        <dbReference type="UniProtKB" id="P23506"/>
    </source>
</evidence>
<evidence type="ECO:0000250" key="3">
    <source>
        <dbReference type="UniProtKB" id="Q27869"/>
    </source>
</evidence>
<evidence type="ECO:0000305" key="4"/>
<comment type="function">
    <text evidence="2">Initiates the repair of damaged proteins by catalyzing methyl esterification of L-isoaspartyl and D-aspartyl residues produced by spontaneous isomerization and racemization of L-aspartyl and L-asparaginyl residues in aging peptides and proteins.</text>
</comment>
<comment type="catalytic activity">
    <reaction evidence="2">
        <text>[protein]-L-isoaspartate + S-adenosyl-L-methionine = [protein]-L-isoaspartate alpha-methyl ester + S-adenosyl-L-homocysteine</text>
        <dbReference type="Rhea" id="RHEA:12705"/>
        <dbReference type="Rhea" id="RHEA-COMP:12143"/>
        <dbReference type="Rhea" id="RHEA-COMP:12144"/>
        <dbReference type="ChEBI" id="CHEBI:57856"/>
        <dbReference type="ChEBI" id="CHEBI:59789"/>
        <dbReference type="ChEBI" id="CHEBI:90596"/>
        <dbReference type="ChEBI" id="CHEBI:90598"/>
        <dbReference type="EC" id="2.1.1.77"/>
    </reaction>
    <physiologicalReaction direction="left-to-right" evidence="2">
        <dbReference type="Rhea" id="RHEA:12706"/>
    </physiologicalReaction>
</comment>
<comment type="subunit">
    <text evidence="1">Monomer.</text>
</comment>
<comment type="subcellular location">
    <subcellularLocation>
        <location evidence="1">Cytoplasm</location>
        <location evidence="1">Cytosol</location>
    </subcellularLocation>
</comment>
<comment type="similarity">
    <text evidence="4">Belongs to the methyltransferase superfamily. L-isoaspartyl/D-aspartyl protein methyltransferase family.</text>
</comment>
<gene>
    <name type="primary">pcm-1</name>
    <name type="ORF">C10F3.5</name>
</gene>
<name>PIMT_CAEEL</name>
<feature type="chain" id="PRO_0000111880" description="Protein-L-isoaspartate O-methyltransferase">
    <location>
        <begin position="1"/>
        <end position="225"/>
    </location>
</feature>
<feature type="active site" evidence="3">
    <location>
        <position position="60"/>
    </location>
</feature>
<feature type="binding site" evidence="1">
    <location>
        <begin position="57"/>
        <end position="60"/>
    </location>
    <ligand>
        <name>S-adenosyl-L-homocysteine</name>
        <dbReference type="ChEBI" id="CHEBI:57856"/>
    </ligand>
</feature>
<feature type="binding site" evidence="1">
    <location>
        <position position="65"/>
    </location>
    <ligand>
        <name>S-adenosyl-L-homocysteine</name>
        <dbReference type="ChEBI" id="CHEBI:57856"/>
    </ligand>
</feature>
<feature type="binding site" evidence="1">
    <location>
        <position position="89"/>
    </location>
    <ligand>
        <name>S-adenosyl-L-homocysteine</name>
        <dbReference type="ChEBI" id="CHEBI:57856"/>
    </ligand>
</feature>
<feature type="binding site" evidence="1">
    <location>
        <begin position="110"/>
        <end position="111"/>
    </location>
    <ligand>
        <name>S-adenosyl-L-homocysteine</name>
        <dbReference type="ChEBI" id="CHEBI:57856"/>
    </ligand>
</feature>
<feature type="binding site" evidence="1">
    <location>
        <begin position="142"/>
        <end position="143"/>
    </location>
    <ligand>
        <name>S-adenosyl-L-homocysteine</name>
        <dbReference type="ChEBI" id="CHEBI:57856"/>
    </ligand>
</feature>
<feature type="binding site" evidence="1">
    <location>
        <position position="216"/>
    </location>
    <ligand>
        <name>S-adenosyl-L-homocysteine</name>
        <dbReference type="ChEBI" id="CHEBI:57856"/>
    </ligand>
</feature>
<feature type="binding site" evidence="1">
    <location>
        <position position="221"/>
    </location>
    <ligand>
        <name>S-adenosyl-L-homocysteine</name>
        <dbReference type="ChEBI" id="CHEBI:57856"/>
    </ligand>
</feature>
<proteinExistence type="evidence at transcript level"/>
<keyword id="KW-0963">Cytoplasm</keyword>
<keyword id="KW-0489">Methyltransferase</keyword>
<keyword id="KW-1185">Reference proteome</keyword>
<keyword id="KW-0949">S-adenosyl-L-methionine</keyword>
<keyword id="KW-0808">Transferase</keyword>
<sequence length="225" mass="24767">MAWRSSGSTNSELIDNLRNNRVFASQRAYDAMKSVDRGDFAPRAPYEDAPQRIGYNATVSAPHMHAAALDYLQNHLVAGAKALDVGSGSGYLTVCMAMMVGRNGTVVGIEHMPQLVELSEKNIRKHHSEQLERGNVIIIEGDGRQGFAEKAPYNAIHVGAASKGVPKALTDQLAEGGRMMIPVEQVDGNQVFMQIDKINGKIEQKIVEHVIYVPLTSREEQWNRN</sequence>
<dbReference type="EC" id="2.1.1.77" evidence="2"/>
<dbReference type="EMBL" id="U15129">
    <property type="protein sequence ID" value="AAB60240.1"/>
    <property type="molecule type" value="Genomic_DNA"/>
</dbReference>
<dbReference type="EMBL" id="U09669">
    <property type="protein sequence ID" value="AAA82166.1"/>
    <property type="molecule type" value="mRNA"/>
</dbReference>
<dbReference type="EMBL" id="FO080493">
    <property type="protein sequence ID" value="CCD64125.1"/>
    <property type="molecule type" value="Genomic_DNA"/>
</dbReference>
<dbReference type="PIR" id="T32150">
    <property type="entry name" value="T32150"/>
</dbReference>
<dbReference type="RefSeq" id="NP_504551.3">
    <property type="nucleotide sequence ID" value="NM_072150.5"/>
</dbReference>
<dbReference type="SMR" id="Q27873"/>
<dbReference type="BioGRID" id="44029">
    <property type="interactions" value="4"/>
</dbReference>
<dbReference type="DIP" id="DIP-25593N"/>
<dbReference type="FunCoup" id="Q27873">
    <property type="interactions" value="1473"/>
</dbReference>
<dbReference type="STRING" id="6239.C10F3.5a.1"/>
<dbReference type="PaxDb" id="6239-C10F3.5a"/>
<dbReference type="EnsemblMetazoa" id="C10F3.5a.1">
    <property type="protein sequence ID" value="C10F3.5a.1"/>
    <property type="gene ID" value="WBGene00003954"/>
</dbReference>
<dbReference type="GeneID" id="178981"/>
<dbReference type="KEGG" id="cel:CELE_C10F3.5"/>
<dbReference type="UCSC" id="C10F3.5a">
    <property type="organism name" value="c. elegans"/>
</dbReference>
<dbReference type="AGR" id="WB:WBGene00003954"/>
<dbReference type="CTD" id="178981"/>
<dbReference type="WormBase" id="C10F3.5a">
    <property type="protein sequence ID" value="CE08070"/>
    <property type="gene ID" value="WBGene00003954"/>
    <property type="gene designation" value="pcm-1"/>
</dbReference>
<dbReference type="eggNOG" id="KOG1661">
    <property type="taxonomic scope" value="Eukaryota"/>
</dbReference>
<dbReference type="GeneTree" id="ENSGT00950000183032"/>
<dbReference type="HOGENOM" id="CLU_055432_0_4_1"/>
<dbReference type="InParanoid" id="Q27873"/>
<dbReference type="OMA" id="HMHASAC"/>
<dbReference type="OrthoDB" id="73890at2759"/>
<dbReference type="PhylomeDB" id="Q27873"/>
<dbReference type="Reactome" id="R-CEL-5676934">
    <property type="pathway name" value="Protein repair"/>
</dbReference>
<dbReference type="SignaLink" id="Q27873"/>
<dbReference type="PRO" id="PR:Q27873"/>
<dbReference type="Proteomes" id="UP000001940">
    <property type="component" value="Chromosome V"/>
</dbReference>
<dbReference type="Bgee" id="WBGene00003954">
    <property type="expression patterns" value="Expressed in pharyngeal muscle cell (C elegans) and 4 other cell types or tissues"/>
</dbReference>
<dbReference type="ExpressionAtlas" id="Q27873">
    <property type="expression patterns" value="baseline and differential"/>
</dbReference>
<dbReference type="GO" id="GO:0030424">
    <property type="term" value="C:axon"/>
    <property type="evidence" value="ECO:0000314"/>
    <property type="project" value="WormBase"/>
</dbReference>
<dbReference type="GO" id="GO:0005737">
    <property type="term" value="C:cytoplasm"/>
    <property type="evidence" value="ECO:0000314"/>
    <property type="project" value="WormBase"/>
</dbReference>
<dbReference type="GO" id="GO:0005829">
    <property type="term" value="C:cytosol"/>
    <property type="evidence" value="ECO:0000314"/>
    <property type="project" value="WormBase"/>
</dbReference>
<dbReference type="GO" id="GO:0043025">
    <property type="term" value="C:neuronal cell body"/>
    <property type="evidence" value="ECO:0000314"/>
    <property type="project" value="WormBase"/>
</dbReference>
<dbReference type="GO" id="GO:0004719">
    <property type="term" value="F:protein-L-isoaspartate (D-aspartate) O-methyltransferase activity"/>
    <property type="evidence" value="ECO:0000314"/>
    <property type="project" value="WormBase"/>
</dbReference>
<dbReference type="GO" id="GO:0032259">
    <property type="term" value="P:methylation"/>
    <property type="evidence" value="ECO:0007669"/>
    <property type="project" value="UniProtKB-KW"/>
</dbReference>
<dbReference type="GO" id="GO:0033555">
    <property type="term" value="P:multicellular organismal response to stress"/>
    <property type="evidence" value="ECO:0000314"/>
    <property type="project" value="WormBase"/>
</dbReference>
<dbReference type="GO" id="GO:0036211">
    <property type="term" value="P:protein modification process"/>
    <property type="evidence" value="ECO:0007669"/>
    <property type="project" value="InterPro"/>
</dbReference>
<dbReference type="GO" id="GO:0010506">
    <property type="term" value="P:regulation of autophagy"/>
    <property type="evidence" value="ECO:0000315"/>
    <property type="project" value="WormBase"/>
</dbReference>
<dbReference type="GO" id="GO:0042594">
    <property type="term" value="P:response to starvation"/>
    <property type="evidence" value="ECO:0000315"/>
    <property type="project" value="WormBase"/>
</dbReference>
<dbReference type="CDD" id="cd02440">
    <property type="entry name" value="AdoMet_MTases"/>
    <property type="match status" value="1"/>
</dbReference>
<dbReference type="FunFam" id="3.40.50.150:FF:000235">
    <property type="entry name" value="Protein-L-isoaspartate O-methyltransferase"/>
    <property type="match status" value="1"/>
</dbReference>
<dbReference type="Gene3D" id="3.40.50.150">
    <property type="entry name" value="Vaccinia Virus protein VP39"/>
    <property type="match status" value="1"/>
</dbReference>
<dbReference type="InterPro" id="IPR000682">
    <property type="entry name" value="PCMT"/>
</dbReference>
<dbReference type="InterPro" id="IPR029063">
    <property type="entry name" value="SAM-dependent_MTases_sf"/>
</dbReference>
<dbReference type="NCBIfam" id="TIGR00080">
    <property type="entry name" value="pimt"/>
    <property type="match status" value="1"/>
</dbReference>
<dbReference type="PANTHER" id="PTHR11579">
    <property type="entry name" value="PROTEIN-L-ISOASPARTATE O-METHYLTRANSFERASE"/>
    <property type="match status" value="1"/>
</dbReference>
<dbReference type="PANTHER" id="PTHR11579:SF0">
    <property type="entry name" value="PROTEIN-L-ISOASPARTATE(D-ASPARTATE) O-METHYLTRANSFERASE"/>
    <property type="match status" value="1"/>
</dbReference>
<dbReference type="Pfam" id="PF01135">
    <property type="entry name" value="PCMT"/>
    <property type="match status" value="1"/>
</dbReference>
<dbReference type="SUPFAM" id="SSF53335">
    <property type="entry name" value="S-adenosyl-L-methionine-dependent methyltransferases"/>
    <property type="match status" value="1"/>
</dbReference>
<dbReference type="PROSITE" id="PS01279">
    <property type="entry name" value="PCMT"/>
    <property type="match status" value="1"/>
</dbReference>
<protein>
    <recommendedName>
        <fullName evidence="2">Protein-L-isoaspartate O-methyltransferase</fullName>
        <shortName>PIMT</shortName>
        <ecNumber evidence="2">2.1.1.77</ecNumber>
    </recommendedName>
    <alternativeName>
        <fullName>L-isoaspartyl protein carboxyl methyltransferase</fullName>
    </alternativeName>
    <alternativeName>
        <fullName>Protein L-isoaspartyl methyltransferase</fullName>
    </alternativeName>
    <alternativeName>
        <fullName>Protein-beta-aspartate methyltransferase</fullName>
    </alternativeName>
</protein>
<organism>
    <name type="scientific">Caenorhabditis elegans</name>
    <dbReference type="NCBI Taxonomy" id="6239"/>
    <lineage>
        <taxon>Eukaryota</taxon>
        <taxon>Metazoa</taxon>
        <taxon>Ecdysozoa</taxon>
        <taxon>Nematoda</taxon>
        <taxon>Chromadorea</taxon>
        <taxon>Rhabditida</taxon>
        <taxon>Rhabditina</taxon>
        <taxon>Rhabditomorpha</taxon>
        <taxon>Rhabditoidea</taxon>
        <taxon>Rhabditidae</taxon>
        <taxon>Peloderinae</taxon>
        <taxon>Caenorhabditis</taxon>
    </lineage>
</organism>
<accession>Q27873</accession>
<reference key="1">
    <citation type="journal article" date="1995" name="Biochemistry">
        <title>Protein L-isoaspartyl methyltransferase from the nematode Caenorhabditis elegans: genomic structure and substrate specificity.</title>
        <authorList>
            <person name="Kagan R.M."/>
            <person name="Clarke S."/>
        </authorList>
    </citation>
    <scope>NUCLEOTIDE SEQUENCE [GENOMIC DNA / MRNA]</scope>
    <source>
        <strain>Bristol N2</strain>
    </source>
</reference>
<reference key="2">
    <citation type="journal article" date="1998" name="Science">
        <title>Genome sequence of the nematode C. elegans: a platform for investigating biology.</title>
        <authorList>
            <consortium name="The C. elegans sequencing consortium"/>
        </authorList>
    </citation>
    <scope>NUCLEOTIDE SEQUENCE [LARGE SCALE GENOMIC DNA]</scope>
    <source>
        <strain>Bristol N2</strain>
    </source>
</reference>